<protein>
    <recommendedName>
        <fullName evidence="1">4-hydroxybenzoate octaprenyltransferase</fullName>
        <ecNumber evidence="1">2.5.1.39</ecNumber>
    </recommendedName>
    <alternativeName>
        <fullName evidence="1">4-HB polyprenyltransferase</fullName>
    </alternativeName>
</protein>
<sequence>MTFADRLSAYTRLIRLDKPIGILLLLWPTLWGLWLAADGMPDPMILVIFILGTILMRSAGCAINDFADRRIDPHVSRTRNRPLAAGLITAREALLIAAGLSLCAFLLILPLNLLTIQLSVPALFLAASYPFTKRFFAMPQAYLGIAFSFGIPMAFAAQTGTVPPLAWLLVLANLFWVIAYDTEYALVDRADDLKIGIRTSAITLGRFDVAGILLCHIIFLSTLTYAGILLQRGIWFYGALLVALGLVIVQYGMIRKREPSRCFQAFLHNNWIGAVIFAGILLDTLFRTDQSF</sequence>
<feature type="chain" id="PRO_0000262812" description="4-hydroxybenzoate octaprenyltransferase">
    <location>
        <begin position="1"/>
        <end position="292"/>
    </location>
</feature>
<feature type="transmembrane region" description="Helical" evidence="1">
    <location>
        <begin position="20"/>
        <end position="40"/>
    </location>
</feature>
<feature type="transmembrane region" description="Helical" evidence="1">
    <location>
        <begin position="43"/>
        <end position="63"/>
    </location>
</feature>
<feature type="transmembrane region" description="Helical" evidence="1">
    <location>
        <begin position="94"/>
        <end position="114"/>
    </location>
</feature>
<feature type="transmembrane region" description="Helical" evidence="1">
    <location>
        <begin position="135"/>
        <end position="155"/>
    </location>
</feature>
<feature type="transmembrane region" description="Helical" evidence="1">
    <location>
        <begin position="160"/>
        <end position="180"/>
    </location>
</feature>
<feature type="transmembrane region" description="Helical" evidence="1">
    <location>
        <begin position="209"/>
        <end position="229"/>
    </location>
</feature>
<feature type="transmembrane region" description="Helical" evidence="1">
    <location>
        <begin position="234"/>
        <end position="254"/>
    </location>
</feature>
<feature type="transmembrane region" description="Helical" evidence="1">
    <location>
        <begin position="266"/>
        <end position="286"/>
    </location>
</feature>
<accession>Q82TP2</accession>
<gene>
    <name evidence="1" type="primary">ubiA</name>
    <name type="ordered locus">NE1838</name>
</gene>
<dbReference type="EC" id="2.5.1.39" evidence="1"/>
<dbReference type="EMBL" id="AL954747">
    <property type="protein sequence ID" value="CAD85749.1"/>
    <property type="status" value="ALT_INIT"/>
    <property type="molecule type" value="Genomic_DNA"/>
</dbReference>
<dbReference type="RefSeq" id="WP_041357237.1">
    <property type="nucleotide sequence ID" value="NC_004757.1"/>
</dbReference>
<dbReference type="SMR" id="Q82TP2"/>
<dbReference type="STRING" id="228410.NE1838"/>
<dbReference type="GeneID" id="87104997"/>
<dbReference type="KEGG" id="neu:NE1838"/>
<dbReference type="eggNOG" id="COG0382">
    <property type="taxonomic scope" value="Bacteria"/>
</dbReference>
<dbReference type="HOGENOM" id="CLU_034879_1_0_4"/>
<dbReference type="OrthoDB" id="9782418at2"/>
<dbReference type="PhylomeDB" id="Q82TP2"/>
<dbReference type="UniPathway" id="UPA00232"/>
<dbReference type="Proteomes" id="UP000001416">
    <property type="component" value="Chromosome"/>
</dbReference>
<dbReference type="GO" id="GO:0005886">
    <property type="term" value="C:plasma membrane"/>
    <property type="evidence" value="ECO:0007669"/>
    <property type="project" value="UniProtKB-SubCell"/>
</dbReference>
<dbReference type="GO" id="GO:0008412">
    <property type="term" value="F:4-hydroxybenzoate polyprenyltransferase activity"/>
    <property type="evidence" value="ECO:0007669"/>
    <property type="project" value="UniProtKB-UniRule"/>
</dbReference>
<dbReference type="GO" id="GO:0006744">
    <property type="term" value="P:ubiquinone biosynthetic process"/>
    <property type="evidence" value="ECO:0007669"/>
    <property type="project" value="UniProtKB-UniRule"/>
</dbReference>
<dbReference type="CDD" id="cd13959">
    <property type="entry name" value="PT_UbiA_COQ2"/>
    <property type="match status" value="1"/>
</dbReference>
<dbReference type="FunFam" id="1.10.357.140:FF:000002">
    <property type="entry name" value="4-hydroxybenzoate octaprenyltransferase"/>
    <property type="match status" value="1"/>
</dbReference>
<dbReference type="FunFam" id="1.20.120.1780:FF:000001">
    <property type="entry name" value="4-hydroxybenzoate octaprenyltransferase"/>
    <property type="match status" value="1"/>
</dbReference>
<dbReference type="Gene3D" id="1.10.357.140">
    <property type="entry name" value="UbiA prenyltransferase"/>
    <property type="match status" value="1"/>
</dbReference>
<dbReference type="Gene3D" id="1.20.120.1780">
    <property type="entry name" value="UbiA prenyltransferase"/>
    <property type="match status" value="1"/>
</dbReference>
<dbReference type="HAMAP" id="MF_01635">
    <property type="entry name" value="UbiA"/>
    <property type="match status" value="1"/>
</dbReference>
<dbReference type="InterPro" id="IPR006370">
    <property type="entry name" value="HB_polyprenyltransferase-like"/>
</dbReference>
<dbReference type="InterPro" id="IPR039653">
    <property type="entry name" value="Prenyltransferase"/>
</dbReference>
<dbReference type="InterPro" id="IPR000537">
    <property type="entry name" value="UbiA_prenyltransferase"/>
</dbReference>
<dbReference type="InterPro" id="IPR030470">
    <property type="entry name" value="UbiA_prenylTrfase_CS"/>
</dbReference>
<dbReference type="InterPro" id="IPR044878">
    <property type="entry name" value="UbiA_sf"/>
</dbReference>
<dbReference type="NCBIfam" id="TIGR01474">
    <property type="entry name" value="ubiA_proteo"/>
    <property type="match status" value="1"/>
</dbReference>
<dbReference type="PANTHER" id="PTHR11048:SF28">
    <property type="entry name" value="4-HYDROXYBENZOATE POLYPRENYLTRANSFERASE, MITOCHONDRIAL"/>
    <property type="match status" value="1"/>
</dbReference>
<dbReference type="PANTHER" id="PTHR11048">
    <property type="entry name" value="PRENYLTRANSFERASES"/>
    <property type="match status" value="1"/>
</dbReference>
<dbReference type="Pfam" id="PF01040">
    <property type="entry name" value="UbiA"/>
    <property type="match status" value="1"/>
</dbReference>
<dbReference type="PROSITE" id="PS00943">
    <property type="entry name" value="UBIA"/>
    <property type="match status" value="1"/>
</dbReference>
<proteinExistence type="inferred from homology"/>
<evidence type="ECO:0000255" key="1">
    <source>
        <dbReference type="HAMAP-Rule" id="MF_01635"/>
    </source>
</evidence>
<evidence type="ECO:0000305" key="2"/>
<organism>
    <name type="scientific">Nitrosomonas europaea (strain ATCC 19718 / CIP 103999 / KCTC 2705 / NBRC 14298)</name>
    <dbReference type="NCBI Taxonomy" id="228410"/>
    <lineage>
        <taxon>Bacteria</taxon>
        <taxon>Pseudomonadati</taxon>
        <taxon>Pseudomonadota</taxon>
        <taxon>Betaproteobacteria</taxon>
        <taxon>Nitrosomonadales</taxon>
        <taxon>Nitrosomonadaceae</taxon>
        <taxon>Nitrosomonas</taxon>
    </lineage>
</organism>
<reference key="1">
    <citation type="journal article" date="2003" name="J. Bacteriol.">
        <title>Complete genome sequence of the ammonia-oxidizing bacterium and obligate chemolithoautotroph Nitrosomonas europaea.</title>
        <authorList>
            <person name="Chain P."/>
            <person name="Lamerdin J.E."/>
            <person name="Larimer F.W."/>
            <person name="Regala W."/>
            <person name="Lao V."/>
            <person name="Land M.L."/>
            <person name="Hauser L."/>
            <person name="Hooper A.B."/>
            <person name="Klotz M.G."/>
            <person name="Norton J."/>
            <person name="Sayavedra-Soto L.A."/>
            <person name="Arciero D.M."/>
            <person name="Hommes N.G."/>
            <person name="Whittaker M.M."/>
            <person name="Arp D.J."/>
        </authorList>
    </citation>
    <scope>NUCLEOTIDE SEQUENCE [LARGE SCALE GENOMIC DNA]</scope>
    <source>
        <strain>ATCC 19718 / CIP 103999 / KCTC 2705 / NBRC 14298</strain>
    </source>
</reference>
<comment type="function">
    <text evidence="1">Catalyzes the prenylation of para-hydroxybenzoate (PHB) with an all-trans polyprenyl group. Mediates the second step in the final reaction sequence of ubiquinone-8 (UQ-8) biosynthesis, which is the condensation of the polyisoprenoid side chain with PHB, generating the first membrane-bound Q intermediate 3-octaprenyl-4-hydroxybenzoate.</text>
</comment>
<comment type="catalytic activity">
    <reaction evidence="1">
        <text>all-trans-octaprenyl diphosphate + 4-hydroxybenzoate = 4-hydroxy-3-(all-trans-octaprenyl)benzoate + diphosphate</text>
        <dbReference type="Rhea" id="RHEA:27782"/>
        <dbReference type="ChEBI" id="CHEBI:1617"/>
        <dbReference type="ChEBI" id="CHEBI:17879"/>
        <dbReference type="ChEBI" id="CHEBI:33019"/>
        <dbReference type="ChEBI" id="CHEBI:57711"/>
        <dbReference type="EC" id="2.5.1.39"/>
    </reaction>
</comment>
<comment type="cofactor">
    <cofactor evidence="1">
        <name>Mg(2+)</name>
        <dbReference type="ChEBI" id="CHEBI:18420"/>
    </cofactor>
</comment>
<comment type="pathway">
    <text evidence="1">Cofactor biosynthesis; ubiquinone biosynthesis.</text>
</comment>
<comment type="subcellular location">
    <subcellularLocation>
        <location evidence="1">Cell inner membrane</location>
        <topology evidence="1">Multi-pass membrane protein</topology>
    </subcellularLocation>
</comment>
<comment type="similarity">
    <text evidence="1">Belongs to the UbiA prenyltransferase family.</text>
</comment>
<comment type="sequence caution" evidence="2">
    <conflict type="erroneous initiation">
        <sequence resource="EMBL-CDS" id="CAD85749"/>
    </conflict>
</comment>
<keyword id="KW-0997">Cell inner membrane</keyword>
<keyword id="KW-1003">Cell membrane</keyword>
<keyword id="KW-0460">Magnesium</keyword>
<keyword id="KW-0472">Membrane</keyword>
<keyword id="KW-1185">Reference proteome</keyword>
<keyword id="KW-0808">Transferase</keyword>
<keyword id="KW-0812">Transmembrane</keyword>
<keyword id="KW-1133">Transmembrane helix</keyword>
<keyword id="KW-0831">Ubiquinone biosynthesis</keyword>
<name>UBIA_NITEU</name>